<comment type="function">
    <text evidence="1">Required for accurate and efficient protein synthesis under certain stress conditions. May act as a fidelity factor of the translation reaction, by catalyzing a one-codon backward translocation of tRNAs on improperly translocated ribosomes. Back-translocation proceeds from a post-translocation (POST) complex to a pre-translocation (PRE) complex, thus giving elongation factor G a second chance to translocate the tRNAs correctly. Binds to ribosomes in a GTP-dependent manner.</text>
</comment>
<comment type="catalytic activity">
    <reaction evidence="1">
        <text>GTP + H2O = GDP + phosphate + H(+)</text>
        <dbReference type="Rhea" id="RHEA:19669"/>
        <dbReference type="ChEBI" id="CHEBI:15377"/>
        <dbReference type="ChEBI" id="CHEBI:15378"/>
        <dbReference type="ChEBI" id="CHEBI:37565"/>
        <dbReference type="ChEBI" id="CHEBI:43474"/>
        <dbReference type="ChEBI" id="CHEBI:58189"/>
        <dbReference type="EC" id="3.6.5.n1"/>
    </reaction>
</comment>
<comment type="subcellular location">
    <subcellularLocation>
        <location evidence="1">Cell membrane</location>
        <topology evidence="1">Peripheral membrane protein</topology>
        <orientation evidence="1">Cytoplasmic side</orientation>
    </subcellularLocation>
</comment>
<comment type="similarity">
    <text evidence="1">Belongs to the TRAFAC class translation factor GTPase superfamily. Classic translation factor GTPase family. LepA subfamily.</text>
</comment>
<dbReference type="EC" id="3.6.5.n1" evidence="1"/>
<dbReference type="EMBL" id="AM999887">
    <property type="protein sequence ID" value="CAQ54604.1"/>
    <property type="molecule type" value="Genomic_DNA"/>
</dbReference>
<dbReference type="RefSeq" id="WP_007301936.1">
    <property type="nucleotide sequence ID" value="NC_010981.1"/>
</dbReference>
<dbReference type="SMR" id="B3CPV1"/>
<dbReference type="KEGG" id="wpi:WP0496"/>
<dbReference type="eggNOG" id="COG0481">
    <property type="taxonomic scope" value="Bacteria"/>
</dbReference>
<dbReference type="HOGENOM" id="CLU_009995_3_3_5"/>
<dbReference type="Proteomes" id="UP000008814">
    <property type="component" value="Chromosome"/>
</dbReference>
<dbReference type="GO" id="GO:0005886">
    <property type="term" value="C:plasma membrane"/>
    <property type="evidence" value="ECO:0007669"/>
    <property type="project" value="UniProtKB-SubCell"/>
</dbReference>
<dbReference type="GO" id="GO:0005525">
    <property type="term" value="F:GTP binding"/>
    <property type="evidence" value="ECO:0007669"/>
    <property type="project" value="UniProtKB-UniRule"/>
</dbReference>
<dbReference type="GO" id="GO:0003924">
    <property type="term" value="F:GTPase activity"/>
    <property type="evidence" value="ECO:0007669"/>
    <property type="project" value="UniProtKB-UniRule"/>
</dbReference>
<dbReference type="GO" id="GO:0097216">
    <property type="term" value="F:guanosine tetraphosphate binding"/>
    <property type="evidence" value="ECO:0007669"/>
    <property type="project" value="UniProtKB-ARBA"/>
</dbReference>
<dbReference type="GO" id="GO:0043022">
    <property type="term" value="F:ribosome binding"/>
    <property type="evidence" value="ECO:0007669"/>
    <property type="project" value="UniProtKB-UniRule"/>
</dbReference>
<dbReference type="GO" id="GO:0003746">
    <property type="term" value="F:translation elongation factor activity"/>
    <property type="evidence" value="ECO:0007669"/>
    <property type="project" value="UniProtKB-UniRule"/>
</dbReference>
<dbReference type="GO" id="GO:0045727">
    <property type="term" value="P:positive regulation of translation"/>
    <property type="evidence" value="ECO:0007669"/>
    <property type="project" value="UniProtKB-UniRule"/>
</dbReference>
<dbReference type="CDD" id="cd03699">
    <property type="entry name" value="EF4_II"/>
    <property type="match status" value="1"/>
</dbReference>
<dbReference type="CDD" id="cd16260">
    <property type="entry name" value="EF4_III"/>
    <property type="match status" value="1"/>
</dbReference>
<dbReference type="CDD" id="cd01890">
    <property type="entry name" value="LepA"/>
    <property type="match status" value="1"/>
</dbReference>
<dbReference type="CDD" id="cd03709">
    <property type="entry name" value="lepA_C"/>
    <property type="match status" value="1"/>
</dbReference>
<dbReference type="FunFam" id="3.40.50.300:FF:000078">
    <property type="entry name" value="Elongation factor 4"/>
    <property type="match status" value="1"/>
</dbReference>
<dbReference type="FunFam" id="2.40.30.10:FF:000015">
    <property type="entry name" value="Translation factor GUF1, mitochondrial"/>
    <property type="match status" value="1"/>
</dbReference>
<dbReference type="FunFam" id="3.30.70.240:FF:000007">
    <property type="entry name" value="Translation factor GUF1, mitochondrial"/>
    <property type="match status" value="1"/>
</dbReference>
<dbReference type="FunFam" id="3.30.70.2570:FF:000001">
    <property type="entry name" value="Translation factor GUF1, mitochondrial"/>
    <property type="match status" value="1"/>
</dbReference>
<dbReference type="FunFam" id="3.30.70.870:FF:000004">
    <property type="entry name" value="Translation factor GUF1, mitochondrial"/>
    <property type="match status" value="1"/>
</dbReference>
<dbReference type="Gene3D" id="3.30.70.240">
    <property type="match status" value="1"/>
</dbReference>
<dbReference type="Gene3D" id="3.30.70.2570">
    <property type="entry name" value="Elongation factor 4, C-terminal domain"/>
    <property type="match status" value="1"/>
</dbReference>
<dbReference type="Gene3D" id="3.30.70.870">
    <property type="entry name" value="Elongation Factor G (Translational Gtpase), domain 3"/>
    <property type="match status" value="1"/>
</dbReference>
<dbReference type="Gene3D" id="3.40.50.300">
    <property type="entry name" value="P-loop containing nucleotide triphosphate hydrolases"/>
    <property type="match status" value="1"/>
</dbReference>
<dbReference type="Gene3D" id="2.40.30.10">
    <property type="entry name" value="Translation factors"/>
    <property type="match status" value="1"/>
</dbReference>
<dbReference type="HAMAP" id="MF_00071">
    <property type="entry name" value="LepA"/>
    <property type="match status" value="1"/>
</dbReference>
<dbReference type="InterPro" id="IPR006297">
    <property type="entry name" value="EF-4"/>
</dbReference>
<dbReference type="InterPro" id="IPR041095">
    <property type="entry name" value="EFG_II"/>
</dbReference>
<dbReference type="InterPro" id="IPR035647">
    <property type="entry name" value="EFG_III/V"/>
</dbReference>
<dbReference type="InterPro" id="IPR000640">
    <property type="entry name" value="EFG_V-like"/>
</dbReference>
<dbReference type="InterPro" id="IPR004161">
    <property type="entry name" value="EFTu-like_2"/>
</dbReference>
<dbReference type="InterPro" id="IPR031157">
    <property type="entry name" value="G_TR_CS"/>
</dbReference>
<dbReference type="InterPro" id="IPR038363">
    <property type="entry name" value="LepA_C_sf"/>
</dbReference>
<dbReference type="InterPro" id="IPR013842">
    <property type="entry name" value="LepA_CTD"/>
</dbReference>
<dbReference type="InterPro" id="IPR035654">
    <property type="entry name" value="LepA_IV"/>
</dbReference>
<dbReference type="InterPro" id="IPR027417">
    <property type="entry name" value="P-loop_NTPase"/>
</dbReference>
<dbReference type="InterPro" id="IPR005225">
    <property type="entry name" value="Small_GTP-bd"/>
</dbReference>
<dbReference type="InterPro" id="IPR000795">
    <property type="entry name" value="T_Tr_GTP-bd_dom"/>
</dbReference>
<dbReference type="InterPro" id="IPR009000">
    <property type="entry name" value="Transl_B-barrel_sf"/>
</dbReference>
<dbReference type="NCBIfam" id="TIGR01393">
    <property type="entry name" value="lepA"/>
    <property type="match status" value="1"/>
</dbReference>
<dbReference type="NCBIfam" id="TIGR00231">
    <property type="entry name" value="small_GTP"/>
    <property type="match status" value="1"/>
</dbReference>
<dbReference type="PANTHER" id="PTHR43512:SF4">
    <property type="entry name" value="TRANSLATION FACTOR GUF1 HOMOLOG, CHLOROPLASTIC"/>
    <property type="match status" value="1"/>
</dbReference>
<dbReference type="PANTHER" id="PTHR43512">
    <property type="entry name" value="TRANSLATION FACTOR GUF1-RELATED"/>
    <property type="match status" value="1"/>
</dbReference>
<dbReference type="Pfam" id="PF00679">
    <property type="entry name" value="EFG_C"/>
    <property type="match status" value="1"/>
</dbReference>
<dbReference type="Pfam" id="PF14492">
    <property type="entry name" value="EFG_III"/>
    <property type="match status" value="1"/>
</dbReference>
<dbReference type="Pfam" id="PF00009">
    <property type="entry name" value="GTP_EFTU"/>
    <property type="match status" value="1"/>
</dbReference>
<dbReference type="Pfam" id="PF03144">
    <property type="entry name" value="GTP_EFTU_D2"/>
    <property type="match status" value="1"/>
</dbReference>
<dbReference type="Pfam" id="PF06421">
    <property type="entry name" value="LepA_C"/>
    <property type="match status" value="1"/>
</dbReference>
<dbReference type="PRINTS" id="PR00315">
    <property type="entry name" value="ELONGATNFCT"/>
</dbReference>
<dbReference type="SUPFAM" id="SSF54980">
    <property type="entry name" value="EF-G C-terminal domain-like"/>
    <property type="match status" value="2"/>
</dbReference>
<dbReference type="SUPFAM" id="SSF52540">
    <property type="entry name" value="P-loop containing nucleoside triphosphate hydrolases"/>
    <property type="match status" value="1"/>
</dbReference>
<dbReference type="SUPFAM" id="SSF50447">
    <property type="entry name" value="Translation proteins"/>
    <property type="match status" value="1"/>
</dbReference>
<dbReference type="PROSITE" id="PS00301">
    <property type="entry name" value="G_TR_1"/>
    <property type="match status" value="1"/>
</dbReference>
<dbReference type="PROSITE" id="PS51722">
    <property type="entry name" value="G_TR_2"/>
    <property type="match status" value="1"/>
</dbReference>
<protein>
    <recommendedName>
        <fullName evidence="1">Elongation factor 4</fullName>
        <shortName evidence="1">EF-4</shortName>
        <ecNumber evidence="1">3.6.5.n1</ecNumber>
    </recommendedName>
    <alternativeName>
        <fullName evidence="1">Ribosomal back-translocase LepA</fullName>
    </alternativeName>
</protein>
<gene>
    <name evidence="1" type="primary">lepA</name>
    <name type="ordered locus">WP0496</name>
</gene>
<evidence type="ECO:0000255" key="1">
    <source>
        <dbReference type="HAMAP-Rule" id="MF_00071"/>
    </source>
</evidence>
<name>LEPA_WOLPP</name>
<accession>B3CPV1</accession>
<organism>
    <name type="scientific">Wolbachia pipientis subsp. Culex pipiens (strain wPip)</name>
    <dbReference type="NCBI Taxonomy" id="570417"/>
    <lineage>
        <taxon>Bacteria</taxon>
        <taxon>Pseudomonadati</taxon>
        <taxon>Pseudomonadota</taxon>
        <taxon>Alphaproteobacteria</taxon>
        <taxon>Rickettsiales</taxon>
        <taxon>Anaplasmataceae</taxon>
        <taxon>Wolbachieae</taxon>
        <taxon>Wolbachia</taxon>
    </lineage>
</organism>
<keyword id="KW-1003">Cell membrane</keyword>
<keyword id="KW-0342">GTP-binding</keyword>
<keyword id="KW-0378">Hydrolase</keyword>
<keyword id="KW-0472">Membrane</keyword>
<keyword id="KW-0547">Nucleotide-binding</keyword>
<keyword id="KW-0648">Protein biosynthesis</keyword>
<feature type="chain" id="PRO_1000092462" description="Elongation factor 4">
    <location>
        <begin position="1"/>
        <end position="598"/>
    </location>
</feature>
<feature type="domain" description="tr-type G">
    <location>
        <begin position="2"/>
        <end position="184"/>
    </location>
</feature>
<feature type="binding site" evidence="1">
    <location>
        <begin position="14"/>
        <end position="19"/>
    </location>
    <ligand>
        <name>GTP</name>
        <dbReference type="ChEBI" id="CHEBI:37565"/>
    </ligand>
</feature>
<feature type="binding site" evidence="1">
    <location>
        <begin position="131"/>
        <end position="134"/>
    </location>
    <ligand>
        <name>GTP</name>
        <dbReference type="ChEBI" id="CHEBI:37565"/>
    </ligand>
</feature>
<sequence>MNNIRNFAIIAHIDHGKSTLADRLIEECNGLETREMTNQVLDSMDIERERGITIKAQTVRLNYTANNGNKYCLNLMDTPGHVDFSYEVSRSLAACEGSLLVVDSSQGVEAQTLANVYKAIDNNHEIIVVLNKVDLPAADPERIKLQIEEVIGIDATESILISAKTGLGIKDVLEAIVTKLPAPQGDTNAPLQAILVDSWYDPYLGVVILVRVKNGVLKKGMRIVMMSNNATYQVDNIGIFTPKKVMTGELSAGEVGFITASMKEVADCKVGDTITEEKRPCSKALPGFKEVHPVVFCSIFPNNTDDFKYLREALEKLHLNDASFTFDAETSNALGYGFRCGFLGMLHLEVIQERLEREFDLDLTATAPSVIYKVETQNGKVLNIHNPSDMPDPTKIEIVEEPWITATIMVPDQYLGEILSLCEERRGEQQDLSYVGNTTTALLKYKLPLSEVVFDFYDRLKSISKGYASLDWEISDYQESQIDKLSFLVNGEPVDALACIVHKSRAEKRGREICARLKDLIPRQQYKIAIQAAVGGKIIARETINPYRKDVTAKLYGGDVTRRMKLLEKQKKGKKRLHSVGNINIPQNAFIEALKIND</sequence>
<reference key="1">
    <citation type="journal article" date="2008" name="Mol. Biol. Evol.">
        <title>Genome evolution of Wolbachia strain wPip from the Culex pipiens group.</title>
        <authorList>
            <person name="Klasson L."/>
            <person name="Walker T."/>
            <person name="Sebaihia M."/>
            <person name="Sanders M.J."/>
            <person name="Quail M.A."/>
            <person name="Lord A."/>
            <person name="Sanders S."/>
            <person name="Earl J."/>
            <person name="O'Neill S.L."/>
            <person name="Thomson N."/>
            <person name="Sinkins S.P."/>
            <person name="Parkhill J."/>
        </authorList>
    </citation>
    <scope>NUCLEOTIDE SEQUENCE [LARGE SCALE GENOMIC DNA]</scope>
    <source>
        <strain>wPip</strain>
    </source>
</reference>
<proteinExistence type="inferred from homology"/>